<keyword id="KW-1185">Reference proteome</keyword>
<reference key="1">
    <citation type="journal article" date="1996" name="Nucleic Acids Res.">
        <title>Complete sequence analysis of the genome of the bacterium Mycoplasma pneumoniae.</title>
        <authorList>
            <person name="Himmelreich R."/>
            <person name="Hilbert H."/>
            <person name="Plagens H."/>
            <person name="Pirkl E."/>
            <person name="Li B.-C."/>
            <person name="Herrmann R."/>
        </authorList>
    </citation>
    <scope>NUCLEOTIDE SEQUENCE [LARGE SCALE GENOMIC DNA]</scope>
    <source>
        <strain>ATCC 29342 / M129 / Subtype 1</strain>
    </source>
</reference>
<name>Y404_MYCPN</name>
<feature type="chain" id="PRO_0000210513" description="Uncharacterized protein MG285 homolog">
    <location>
        <begin position="1"/>
        <end position="346"/>
    </location>
</feature>
<organism>
    <name type="scientific">Mycoplasma pneumoniae (strain ATCC 29342 / M129 / Subtype 1)</name>
    <name type="common">Mycoplasmoides pneumoniae</name>
    <dbReference type="NCBI Taxonomy" id="272634"/>
    <lineage>
        <taxon>Bacteria</taxon>
        <taxon>Bacillati</taxon>
        <taxon>Mycoplasmatota</taxon>
        <taxon>Mycoplasmoidales</taxon>
        <taxon>Mycoplasmoidaceae</taxon>
        <taxon>Mycoplasmoides</taxon>
    </lineage>
</organism>
<protein>
    <recommendedName>
        <fullName>Uncharacterized protein MG285 homolog</fullName>
    </recommendedName>
</protein>
<gene>
    <name type="ordered locus">MPN_404</name>
    <name type="ORF">F11_orf346</name>
    <name type="ORF">MP434</name>
</gene>
<sequence length="346" mass="40350">MTILTVRQIQNNYYTEYYMGPVRNFADKKEVYFDAKVNNIESKVNKDKALLHITLALKYDSNFPSNMFQAQFKLGNWSSEKIPLQKAPDKKSDLENKIHYFYATLEVPRTALIKREINRISEYIREELTIAFRLNDSSDRYHWSNYNLFDTVAADMYQTVIKETVTFGNMIRLNQLEGEKEGNIQQSELKYGWTMLDYRNMGPLEEVNNLINIKFNQPVKVVSVGVTVSYTAPDGKRQELKDQAEYQHTLNPNEEFKLNFPRRLSFNRVTKKLDFDPNGSAVFLPQGGFGSYEIKLEANVGNQFYTIVATNSFEYAHPFDDPKTNDFFLVQYAPVYSLFNFSDLIQ</sequence>
<dbReference type="EMBL" id="U00089">
    <property type="protein sequence ID" value="AAB96082.1"/>
    <property type="molecule type" value="Genomic_DNA"/>
</dbReference>
<dbReference type="PIR" id="S73760">
    <property type="entry name" value="S73760"/>
</dbReference>
<dbReference type="RefSeq" id="NP_110092.1">
    <property type="nucleotide sequence ID" value="NC_000912.1"/>
</dbReference>
<dbReference type="RefSeq" id="WP_010874760.1">
    <property type="nucleotide sequence ID" value="NZ_OU342337.1"/>
</dbReference>
<dbReference type="IntAct" id="P75380">
    <property type="interactions" value="1"/>
</dbReference>
<dbReference type="STRING" id="272634.MPN_404"/>
<dbReference type="EnsemblBacteria" id="AAB96082">
    <property type="protein sequence ID" value="AAB96082"/>
    <property type="gene ID" value="MPN_404"/>
</dbReference>
<dbReference type="KEGG" id="mpn:MPN_404"/>
<dbReference type="PATRIC" id="fig|272634.6.peg.437"/>
<dbReference type="HOGENOM" id="CLU_798809_0_0_14"/>
<dbReference type="OrthoDB" id="397589at2"/>
<dbReference type="BioCyc" id="MPNE272634:G1GJ3-648-MONOMER"/>
<dbReference type="Proteomes" id="UP000000808">
    <property type="component" value="Chromosome"/>
</dbReference>
<dbReference type="InterPro" id="IPR035233">
    <property type="entry name" value="DUF5443"/>
</dbReference>
<dbReference type="Pfam" id="PF17518">
    <property type="entry name" value="DUF5443"/>
    <property type="match status" value="1"/>
</dbReference>
<accession>P75380</accession>
<proteinExistence type="predicted"/>